<accession>O31648</accession>
<sequence length="168" mass="19234">MVLLETNRLRLQTIDIPLLDAASKQDHQAIKELGYETNGEWPNSDFFEAIPYFREILVKNNGTKGFDSWIIVKKDNYEIVGGTGFLGDPDENGMIEIGFATNKSHRRKGYCVEAAQKLINWALSRETVSRITARCEHDNLGSQKTLEKLGFILNHKSAEYKHWIYVTK</sequence>
<protein>
    <recommendedName>
        <fullName>Uncharacterized N-acetyltransferase YjdG</fullName>
        <ecNumber>2.3.1.-</ecNumber>
    </recommendedName>
</protein>
<name>YJDG_BACSU</name>
<proteinExistence type="inferred from homology"/>
<organism>
    <name type="scientific">Bacillus subtilis (strain 168)</name>
    <dbReference type="NCBI Taxonomy" id="224308"/>
    <lineage>
        <taxon>Bacteria</taxon>
        <taxon>Bacillati</taxon>
        <taxon>Bacillota</taxon>
        <taxon>Bacilli</taxon>
        <taxon>Bacillales</taxon>
        <taxon>Bacillaceae</taxon>
        <taxon>Bacillus</taxon>
    </lineage>
</organism>
<dbReference type="EC" id="2.3.1.-"/>
<dbReference type="EMBL" id="AL009126">
    <property type="protein sequence ID" value="CAB13061.1"/>
    <property type="molecule type" value="Genomic_DNA"/>
</dbReference>
<dbReference type="PIR" id="B69849">
    <property type="entry name" value="B69849"/>
</dbReference>
<dbReference type="RefSeq" id="NP_389086.1">
    <property type="nucleotide sequence ID" value="NC_000964.3"/>
</dbReference>
<dbReference type="RefSeq" id="WP_003232828.1">
    <property type="nucleotide sequence ID" value="NZ_OZ025638.1"/>
</dbReference>
<dbReference type="SMR" id="O31648"/>
<dbReference type="FunCoup" id="O31648">
    <property type="interactions" value="15"/>
</dbReference>
<dbReference type="STRING" id="224308.BSU12040"/>
<dbReference type="PaxDb" id="224308-BSU12040"/>
<dbReference type="EnsemblBacteria" id="CAB13061">
    <property type="protein sequence ID" value="CAB13061"/>
    <property type="gene ID" value="BSU_12040"/>
</dbReference>
<dbReference type="GeneID" id="936436"/>
<dbReference type="KEGG" id="bsu:BSU12040"/>
<dbReference type="PATRIC" id="fig|224308.179.peg.1299"/>
<dbReference type="eggNOG" id="COG1670">
    <property type="taxonomic scope" value="Bacteria"/>
</dbReference>
<dbReference type="InParanoid" id="O31648"/>
<dbReference type="OrthoDB" id="452315at2"/>
<dbReference type="PhylomeDB" id="O31648"/>
<dbReference type="BioCyc" id="BSUB:BSU12040-MONOMER"/>
<dbReference type="Proteomes" id="UP000001570">
    <property type="component" value="Chromosome"/>
</dbReference>
<dbReference type="GO" id="GO:0016747">
    <property type="term" value="F:acyltransferase activity, transferring groups other than amino-acyl groups"/>
    <property type="evidence" value="ECO:0007669"/>
    <property type="project" value="InterPro"/>
</dbReference>
<dbReference type="Gene3D" id="3.40.630.30">
    <property type="match status" value="1"/>
</dbReference>
<dbReference type="InterPro" id="IPR016181">
    <property type="entry name" value="Acyl_CoA_acyltransferase"/>
</dbReference>
<dbReference type="InterPro" id="IPR000182">
    <property type="entry name" value="GNAT_dom"/>
</dbReference>
<dbReference type="InterPro" id="IPR051531">
    <property type="entry name" value="N-acetyltransferase"/>
</dbReference>
<dbReference type="PANTHER" id="PTHR43792:SF13">
    <property type="entry name" value="ACETYLTRANSFERASE"/>
    <property type="match status" value="1"/>
</dbReference>
<dbReference type="PANTHER" id="PTHR43792">
    <property type="entry name" value="GNAT FAMILY, PUTATIVE (AFU_ORTHOLOGUE AFUA_3G00765)-RELATED-RELATED"/>
    <property type="match status" value="1"/>
</dbReference>
<dbReference type="Pfam" id="PF13302">
    <property type="entry name" value="Acetyltransf_3"/>
    <property type="match status" value="1"/>
</dbReference>
<dbReference type="SUPFAM" id="SSF55729">
    <property type="entry name" value="Acyl-CoA N-acyltransferases (Nat)"/>
    <property type="match status" value="1"/>
</dbReference>
<dbReference type="PROSITE" id="PS51186">
    <property type="entry name" value="GNAT"/>
    <property type="match status" value="1"/>
</dbReference>
<gene>
    <name type="primary">yjdG</name>
    <name type="ordered locus">BSU12040</name>
</gene>
<comment type="similarity">
    <text evidence="2">Belongs to the acetyltransferase family.</text>
</comment>
<evidence type="ECO:0000255" key="1">
    <source>
        <dbReference type="PROSITE-ProRule" id="PRU00532"/>
    </source>
</evidence>
<evidence type="ECO:0000305" key="2"/>
<feature type="chain" id="PRO_0000360497" description="Uncharacterized N-acetyltransferase YjdG">
    <location>
        <begin position="1"/>
        <end position="168"/>
    </location>
</feature>
<feature type="domain" description="N-acetyltransferase" evidence="1">
    <location>
        <begin position="14"/>
        <end position="168"/>
    </location>
</feature>
<reference key="1">
    <citation type="journal article" date="1997" name="Nature">
        <title>The complete genome sequence of the Gram-positive bacterium Bacillus subtilis.</title>
        <authorList>
            <person name="Kunst F."/>
            <person name="Ogasawara N."/>
            <person name="Moszer I."/>
            <person name="Albertini A.M."/>
            <person name="Alloni G."/>
            <person name="Azevedo V."/>
            <person name="Bertero M.G."/>
            <person name="Bessieres P."/>
            <person name="Bolotin A."/>
            <person name="Borchert S."/>
            <person name="Borriss R."/>
            <person name="Boursier L."/>
            <person name="Brans A."/>
            <person name="Braun M."/>
            <person name="Brignell S.C."/>
            <person name="Bron S."/>
            <person name="Brouillet S."/>
            <person name="Bruschi C.V."/>
            <person name="Caldwell B."/>
            <person name="Capuano V."/>
            <person name="Carter N.M."/>
            <person name="Choi S.-K."/>
            <person name="Codani J.-J."/>
            <person name="Connerton I.F."/>
            <person name="Cummings N.J."/>
            <person name="Daniel R.A."/>
            <person name="Denizot F."/>
            <person name="Devine K.M."/>
            <person name="Duesterhoeft A."/>
            <person name="Ehrlich S.D."/>
            <person name="Emmerson P.T."/>
            <person name="Entian K.-D."/>
            <person name="Errington J."/>
            <person name="Fabret C."/>
            <person name="Ferrari E."/>
            <person name="Foulger D."/>
            <person name="Fritz C."/>
            <person name="Fujita M."/>
            <person name="Fujita Y."/>
            <person name="Fuma S."/>
            <person name="Galizzi A."/>
            <person name="Galleron N."/>
            <person name="Ghim S.-Y."/>
            <person name="Glaser P."/>
            <person name="Goffeau A."/>
            <person name="Golightly E.J."/>
            <person name="Grandi G."/>
            <person name="Guiseppi G."/>
            <person name="Guy B.J."/>
            <person name="Haga K."/>
            <person name="Haiech J."/>
            <person name="Harwood C.R."/>
            <person name="Henaut A."/>
            <person name="Hilbert H."/>
            <person name="Holsappel S."/>
            <person name="Hosono S."/>
            <person name="Hullo M.-F."/>
            <person name="Itaya M."/>
            <person name="Jones L.-M."/>
            <person name="Joris B."/>
            <person name="Karamata D."/>
            <person name="Kasahara Y."/>
            <person name="Klaerr-Blanchard M."/>
            <person name="Klein C."/>
            <person name="Kobayashi Y."/>
            <person name="Koetter P."/>
            <person name="Koningstein G."/>
            <person name="Krogh S."/>
            <person name="Kumano M."/>
            <person name="Kurita K."/>
            <person name="Lapidus A."/>
            <person name="Lardinois S."/>
            <person name="Lauber J."/>
            <person name="Lazarevic V."/>
            <person name="Lee S.-M."/>
            <person name="Levine A."/>
            <person name="Liu H."/>
            <person name="Masuda S."/>
            <person name="Mauel C."/>
            <person name="Medigue C."/>
            <person name="Medina N."/>
            <person name="Mellado R.P."/>
            <person name="Mizuno M."/>
            <person name="Moestl D."/>
            <person name="Nakai S."/>
            <person name="Noback M."/>
            <person name="Noone D."/>
            <person name="O'Reilly M."/>
            <person name="Ogawa K."/>
            <person name="Ogiwara A."/>
            <person name="Oudega B."/>
            <person name="Park S.-H."/>
            <person name="Parro V."/>
            <person name="Pohl T.M."/>
            <person name="Portetelle D."/>
            <person name="Porwollik S."/>
            <person name="Prescott A.M."/>
            <person name="Presecan E."/>
            <person name="Pujic P."/>
            <person name="Purnelle B."/>
            <person name="Rapoport G."/>
            <person name="Rey M."/>
            <person name="Reynolds S."/>
            <person name="Rieger M."/>
            <person name="Rivolta C."/>
            <person name="Rocha E."/>
            <person name="Roche B."/>
            <person name="Rose M."/>
            <person name="Sadaie Y."/>
            <person name="Sato T."/>
            <person name="Scanlan E."/>
            <person name="Schleich S."/>
            <person name="Schroeter R."/>
            <person name="Scoffone F."/>
            <person name="Sekiguchi J."/>
            <person name="Sekowska A."/>
            <person name="Seror S.J."/>
            <person name="Serror P."/>
            <person name="Shin B.-S."/>
            <person name="Soldo B."/>
            <person name="Sorokin A."/>
            <person name="Tacconi E."/>
            <person name="Takagi T."/>
            <person name="Takahashi H."/>
            <person name="Takemaru K."/>
            <person name="Takeuchi M."/>
            <person name="Tamakoshi A."/>
            <person name="Tanaka T."/>
            <person name="Terpstra P."/>
            <person name="Tognoni A."/>
            <person name="Tosato V."/>
            <person name="Uchiyama S."/>
            <person name="Vandenbol M."/>
            <person name="Vannier F."/>
            <person name="Vassarotti A."/>
            <person name="Viari A."/>
            <person name="Wambutt R."/>
            <person name="Wedler E."/>
            <person name="Wedler H."/>
            <person name="Weitzenegger T."/>
            <person name="Winters P."/>
            <person name="Wipat A."/>
            <person name="Yamamoto H."/>
            <person name="Yamane K."/>
            <person name="Yasumoto K."/>
            <person name="Yata K."/>
            <person name="Yoshida K."/>
            <person name="Yoshikawa H.-F."/>
            <person name="Zumstein E."/>
            <person name="Yoshikawa H."/>
            <person name="Danchin A."/>
        </authorList>
    </citation>
    <scope>NUCLEOTIDE SEQUENCE [LARGE SCALE GENOMIC DNA]</scope>
    <source>
        <strain>168</strain>
    </source>
</reference>
<keyword id="KW-0012">Acyltransferase</keyword>
<keyword id="KW-1185">Reference proteome</keyword>
<keyword id="KW-0808">Transferase</keyword>